<protein>
    <recommendedName>
        <fullName>Zinc finger CCCH domain-containing protein 32</fullName>
        <shortName>OsC3H32</shortName>
    </recommendedName>
</protein>
<proteinExistence type="evidence at transcript level"/>
<sequence length="711" mass="80160">MEADGAAAAAAAGEASTEAGARPLAPEEEALRRNTDCVYFLASPLTCKKGNECDFRHSDNARMNPRDCWYWLNSNCLNPKCPFRHPPIDGMFGAPTTGMPAVSSHYAPFNSGKQLVPCYYFKKGNCLKGDRCAFYHGPQSVGNNPSEQVVKVSSLPLEQLQTQKNDLLGIKDSVQSTNSIQHGAPITNERGKTAVDRSTVNSARTATVAIPVASNAMSCPKSEKVKSSTPAALKESFTTSSGGDHPECYQNHFPMDSDPVRDWNQSYEMPPADDLPQNSREADELLGESSPGFDVLVDNDADGAAYLHDEDFGGDMYPVEDYEYAPADFDVRAHHERERFNGMDEQDQMGHMYDGYERKRRRSSERSMERPFHSERRFLQRDRDRVEMDGSDLRHRLRRRRINESSLAISPERNGEQRRRDERYRERAHGHRSHRDHHQSSRGSTLSSRLQGRIKLPGRSPDRVDTRSEKERDRRRLRDRLSPVRRTEFQGTRHREAGQHEEQTQRRSSELALGSRNADGQHLTKDVPDSHNFPHRKNSRDSSKANGSVEPEASLDFEGPKPLSVILQRKREAAWANGTSACSPKQDKSAEVSHRQASLAEAEKEGDNIISSDEYKSGSGDEEFRDEGHIPVEGHGQSSSHGDKLEAEDIIEVDPVENQDADNYDQREGESYYEPIEGQDYKSDDENAYEDDDEEYDDDDDFARKVGVVFS</sequence>
<name>C3H32_ORYSJ</name>
<gene>
    <name type="ordered locus">Os04g0671800</name>
    <name type="ordered locus">LOC_Os04g57600</name>
    <name type="ORF">OsJ_015854</name>
    <name type="ORF">OSJNBb0004A17.5</name>
</gene>
<accession>Q0J952</accession>
<accession>A0A0P0WG78</accession>
<accession>Q7XPI4</accession>
<organism>
    <name type="scientific">Oryza sativa subsp. japonica</name>
    <name type="common">Rice</name>
    <dbReference type="NCBI Taxonomy" id="39947"/>
    <lineage>
        <taxon>Eukaryota</taxon>
        <taxon>Viridiplantae</taxon>
        <taxon>Streptophyta</taxon>
        <taxon>Embryophyta</taxon>
        <taxon>Tracheophyta</taxon>
        <taxon>Spermatophyta</taxon>
        <taxon>Magnoliopsida</taxon>
        <taxon>Liliopsida</taxon>
        <taxon>Poales</taxon>
        <taxon>Poaceae</taxon>
        <taxon>BOP clade</taxon>
        <taxon>Oryzoideae</taxon>
        <taxon>Oryzeae</taxon>
        <taxon>Oryzinae</taxon>
        <taxon>Oryza</taxon>
        <taxon>Oryza sativa</taxon>
    </lineage>
</organism>
<evidence type="ECO:0000255" key="1">
    <source>
        <dbReference type="PROSITE-ProRule" id="PRU00723"/>
    </source>
</evidence>
<evidence type="ECO:0000256" key="2">
    <source>
        <dbReference type="SAM" id="MobiDB-lite"/>
    </source>
</evidence>
<evidence type="ECO:0000305" key="3"/>
<keyword id="KW-0238">DNA-binding</keyword>
<keyword id="KW-0479">Metal-binding</keyword>
<keyword id="KW-1185">Reference proteome</keyword>
<keyword id="KW-0677">Repeat</keyword>
<keyword id="KW-0862">Zinc</keyword>
<keyword id="KW-0863">Zinc-finger</keyword>
<reference key="1">
    <citation type="journal article" date="2002" name="Nature">
        <title>Sequence and analysis of rice chromosome 4.</title>
        <authorList>
            <person name="Feng Q."/>
            <person name="Zhang Y."/>
            <person name="Hao P."/>
            <person name="Wang S."/>
            <person name="Fu G."/>
            <person name="Huang Y."/>
            <person name="Li Y."/>
            <person name="Zhu J."/>
            <person name="Liu Y."/>
            <person name="Hu X."/>
            <person name="Jia P."/>
            <person name="Zhang Y."/>
            <person name="Zhao Q."/>
            <person name="Ying K."/>
            <person name="Yu S."/>
            <person name="Tang Y."/>
            <person name="Weng Q."/>
            <person name="Zhang L."/>
            <person name="Lu Y."/>
            <person name="Mu J."/>
            <person name="Lu Y."/>
            <person name="Zhang L.S."/>
            <person name="Yu Z."/>
            <person name="Fan D."/>
            <person name="Liu X."/>
            <person name="Lu T."/>
            <person name="Li C."/>
            <person name="Wu Y."/>
            <person name="Sun T."/>
            <person name="Lei H."/>
            <person name="Li T."/>
            <person name="Hu H."/>
            <person name="Guan J."/>
            <person name="Wu M."/>
            <person name="Zhang R."/>
            <person name="Zhou B."/>
            <person name="Chen Z."/>
            <person name="Chen L."/>
            <person name="Jin Z."/>
            <person name="Wang R."/>
            <person name="Yin H."/>
            <person name="Cai Z."/>
            <person name="Ren S."/>
            <person name="Lv G."/>
            <person name="Gu W."/>
            <person name="Zhu G."/>
            <person name="Tu Y."/>
            <person name="Jia J."/>
            <person name="Zhang Y."/>
            <person name="Chen J."/>
            <person name="Kang H."/>
            <person name="Chen X."/>
            <person name="Shao C."/>
            <person name="Sun Y."/>
            <person name="Hu Q."/>
            <person name="Zhang X."/>
            <person name="Zhang W."/>
            <person name="Wang L."/>
            <person name="Ding C."/>
            <person name="Sheng H."/>
            <person name="Gu J."/>
            <person name="Chen S."/>
            <person name="Ni L."/>
            <person name="Zhu F."/>
            <person name="Chen W."/>
            <person name="Lan L."/>
            <person name="Lai Y."/>
            <person name="Cheng Z."/>
            <person name="Gu M."/>
            <person name="Jiang J."/>
            <person name="Li J."/>
            <person name="Hong G."/>
            <person name="Xue Y."/>
            <person name="Han B."/>
        </authorList>
    </citation>
    <scope>NUCLEOTIDE SEQUENCE [LARGE SCALE GENOMIC DNA]</scope>
    <source>
        <strain>cv. Nipponbare</strain>
    </source>
</reference>
<reference key="2">
    <citation type="journal article" date="2005" name="Nature">
        <title>The map-based sequence of the rice genome.</title>
        <authorList>
            <consortium name="International rice genome sequencing project (IRGSP)"/>
        </authorList>
    </citation>
    <scope>NUCLEOTIDE SEQUENCE [LARGE SCALE GENOMIC DNA]</scope>
    <source>
        <strain>cv. Nipponbare</strain>
    </source>
</reference>
<reference key="3">
    <citation type="journal article" date="2008" name="Nucleic Acids Res.">
        <title>The rice annotation project database (RAP-DB): 2008 update.</title>
        <authorList>
            <consortium name="The rice annotation project (RAP)"/>
        </authorList>
    </citation>
    <scope>GENOME REANNOTATION</scope>
    <source>
        <strain>cv. Nipponbare</strain>
    </source>
</reference>
<reference key="4">
    <citation type="journal article" date="2013" name="Rice">
        <title>Improvement of the Oryza sativa Nipponbare reference genome using next generation sequence and optical map data.</title>
        <authorList>
            <person name="Kawahara Y."/>
            <person name="de la Bastide M."/>
            <person name="Hamilton J.P."/>
            <person name="Kanamori H."/>
            <person name="McCombie W.R."/>
            <person name="Ouyang S."/>
            <person name="Schwartz D.C."/>
            <person name="Tanaka T."/>
            <person name="Wu J."/>
            <person name="Zhou S."/>
            <person name="Childs K.L."/>
            <person name="Davidson R.M."/>
            <person name="Lin H."/>
            <person name="Quesada-Ocampo L."/>
            <person name="Vaillancourt B."/>
            <person name="Sakai H."/>
            <person name="Lee S.S."/>
            <person name="Kim J."/>
            <person name="Numa H."/>
            <person name="Itoh T."/>
            <person name="Buell C.R."/>
            <person name="Matsumoto T."/>
        </authorList>
    </citation>
    <scope>GENOME REANNOTATION</scope>
    <source>
        <strain>cv. Nipponbare</strain>
    </source>
</reference>
<reference key="5">
    <citation type="journal article" date="2005" name="PLoS Biol.">
        <title>The genomes of Oryza sativa: a history of duplications.</title>
        <authorList>
            <person name="Yu J."/>
            <person name="Wang J."/>
            <person name="Lin W."/>
            <person name="Li S."/>
            <person name="Li H."/>
            <person name="Zhou J."/>
            <person name="Ni P."/>
            <person name="Dong W."/>
            <person name="Hu S."/>
            <person name="Zeng C."/>
            <person name="Zhang J."/>
            <person name="Zhang Y."/>
            <person name="Li R."/>
            <person name="Xu Z."/>
            <person name="Li S."/>
            <person name="Li X."/>
            <person name="Zheng H."/>
            <person name="Cong L."/>
            <person name="Lin L."/>
            <person name="Yin J."/>
            <person name="Geng J."/>
            <person name="Li G."/>
            <person name="Shi J."/>
            <person name="Liu J."/>
            <person name="Lv H."/>
            <person name="Li J."/>
            <person name="Wang J."/>
            <person name="Deng Y."/>
            <person name="Ran L."/>
            <person name="Shi X."/>
            <person name="Wang X."/>
            <person name="Wu Q."/>
            <person name="Li C."/>
            <person name="Ren X."/>
            <person name="Wang J."/>
            <person name="Wang X."/>
            <person name="Li D."/>
            <person name="Liu D."/>
            <person name="Zhang X."/>
            <person name="Ji Z."/>
            <person name="Zhao W."/>
            <person name="Sun Y."/>
            <person name="Zhang Z."/>
            <person name="Bao J."/>
            <person name="Han Y."/>
            <person name="Dong L."/>
            <person name="Ji J."/>
            <person name="Chen P."/>
            <person name="Wu S."/>
            <person name="Liu J."/>
            <person name="Xiao Y."/>
            <person name="Bu D."/>
            <person name="Tan J."/>
            <person name="Yang L."/>
            <person name="Ye C."/>
            <person name="Zhang J."/>
            <person name="Xu J."/>
            <person name="Zhou Y."/>
            <person name="Yu Y."/>
            <person name="Zhang B."/>
            <person name="Zhuang S."/>
            <person name="Wei H."/>
            <person name="Liu B."/>
            <person name="Lei M."/>
            <person name="Yu H."/>
            <person name="Li Y."/>
            <person name="Xu H."/>
            <person name="Wei S."/>
            <person name="He X."/>
            <person name="Fang L."/>
            <person name="Zhang Z."/>
            <person name="Zhang Y."/>
            <person name="Huang X."/>
            <person name="Su Z."/>
            <person name="Tong W."/>
            <person name="Li J."/>
            <person name="Tong Z."/>
            <person name="Li S."/>
            <person name="Ye J."/>
            <person name="Wang L."/>
            <person name="Fang L."/>
            <person name="Lei T."/>
            <person name="Chen C.-S."/>
            <person name="Chen H.-C."/>
            <person name="Xu Z."/>
            <person name="Li H."/>
            <person name="Huang H."/>
            <person name="Zhang F."/>
            <person name="Xu H."/>
            <person name="Li N."/>
            <person name="Zhao C."/>
            <person name="Li S."/>
            <person name="Dong L."/>
            <person name="Huang Y."/>
            <person name="Li L."/>
            <person name="Xi Y."/>
            <person name="Qi Q."/>
            <person name="Li W."/>
            <person name="Zhang B."/>
            <person name="Hu W."/>
            <person name="Zhang Y."/>
            <person name="Tian X."/>
            <person name="Jiao Y."/>
            <person name="Liang X."/>
            <person name="Jin J."/>
            <person name="Gao L."/>
            <person name="Zheng W."/>
            <person name="Hao B."/>
            <person name="Liu S.-M."/>
            <person name="Wang W."/>
            <person name="Yuan L."/>
            <person name="Cao M."/>
            <person name="McDermott J."/>
            <person name="Samudrala R."/>
            <person name="Wang J."/>
            <person name="Wong G.K.-S."/>
            <person name="Yang H."/>
        </authorList>
    </citation>
    <scope>NUCLEOTIDE SEQUENCE [LARGE SCALE GENOMIC DNA]</scope>
    <source>
        <strain>cv. Nipponbare</strain>
    </source>
</reference>
<reference key="6">
    <citation type="journal article" date="2003" name="Science">
        <title>Collection, mapping, and annotation of over 28,000 cDNA clones from japonica rice.</title>
        <authorList>
            <consortium name="The rice full-length cDNA consortium"/>
        </authorList>
    </citation>
    <scope>NUCLEOTIDE SEQUENCE [LARGE SCALE MRNA]</scope>
    <source>
        <strain>cv. Nipponbare</strain>
    </source>
</reference>
<reference key="7">
    <citation type="journal article" date="2008" name="BMC Genomics">
        <title>Genome-wide analysis of CCCH zinc finger family in Arabidopsis and rice.</title>
        <authorList>
            <person name="Wang D."/>
            <person name="Guo Y."/>
            <person name="Wu C."/>
            <person name="Yang G."/>
            <person name="Li Y."/>
            <person name="Zheng C."/>
        </authorList>
    </citation>
    <scope>NOMENCLATURE</scope>
</reference>
<feature type="chain" id="PRO_0000346827" description="Zinc finger CCCH domain-containing protein 32">
    <location>
        <begin position="1"/>
        <end position="711"/>
    </location>
</feature>
<feature type="zinc finger region" description="C3H1-type 1" evidence="1">
    <location>
        <begin position="31"/>
        <end position="60"/>
    </location>
</feature>
<feature type="zinc finger region" description="C3H1-type 2" evidence="1">
    <location>
        <begin position="62"/>
        <end position="88"/>
    </location>
</feature>
<feature type="zinc finger region" description="C3H1-type 3" evidence="1">
    <location>
        <begin position="112"/>
        <end position="139"/>
    </location>
</feature>
<feature type="region of interest" description="Disordered" evidence="2">
    <location>
        <begin position="1"/>
        <end position="23"/>
    </location>
</feature>
<feature type="region of interest" description="Disordered" evidence="2">
    <location>
        <begin position="221"/>
        <end position="246"/>
    </location>
</feature>
<feature type="region of interest" description="Disordered" evidence="2">
    <location>
        <begin position="339"/>
        <end position="376"/>
    </location>
</feature>
<feature type="region of interest" description="Disordered" evidence="2">
    <location>
        <begin position="405"/>
        <end position="561"/>
    </location>
</feature>
<feature type="region of interest" description="Disordered" evidence="2">
    <location>
        <begin position="573"/>
        <end position="701"/>
    </location>
</feature>
<feature type="compositionally biased region" description="Low complexity" evidence="2">
    <location>
        <begin position="1"/>
        <end position="21"/>
    </location>
</feature>
<feature type="compositionally biased region" description="Basic and acidic residues" evidence="2">
    <location>
        <begin position="364"/>
        <end position="376"/>
    </location>
</feature>
<feature type="compositionally biased region" description="Basic and acidic residues" evidence="2">
    <location>
        <begin position="413"/>
        <end position="427"/>
    </location>
</feature>
<feature type="compositionally biased region" description="Basic residues" evidence="2">
    <location>
        <begin position="428"/>
        <end position="437"/>
    </location>
</feature>
<feature type="compositionally biased region" description="Basic and acidic residues" evidence="2">
    <location>
        <begin position="460"/>
        <end position="509"/>
    </location>
</feature>
<feature type="compositionally biased region" description="Basic and acidic residues" evidence="2">
    <location>
        <begin position="585"/>
        <end position="594"/>
    </location>
</feature>
<feature type="compositionally biased region" description="Acidic residues" evidence="2">
    <location>
        <begin position="648"/>
        <end position="663"/>
    </location>
</feature>
<feature type="compositionally biased region" description="Acidic residues" evidence="2">
    <location>
        <begin position="686"/>
        <end position="701"/>
    </location>
</feature>
<feature type="sequence conflict" description="In Ref. 6; AK070857." evidence="3" ref="6">
    <original>N</original>
    <variation>D</variation>
    <location>
        <position position="687"/>
    </location>
</feature>
<dbReference type="EMBL" id="AL606652">
    <property type="protein sequence ID" value="CAE03603.2"/>
    <property type="molecule type" value="Genomic_DNA"/>
</dbReference>
<dbReference type="EMBL" id="AP008210">
    <property type="protein sequence ID" value="BAF16135.1"/>
    <property type="molecule type" value="Genomic_DNA"/>
</dbReference>
<dbReference type="EMBL" id="AP014960">
    <property type="protein sequence ID" value="BAS91570.1"/>
    <property type="molecule type" value="Genomic_DNA"/>
</dbReference>
<dbReference type="EMBL" id="CM000141">
    <property type="protein sequence ID" value="EAZ32371.1"/>
    <property type="molecule type" value="Genomic_DNA"/>
</dbReference>
<dbReference type="EMBL" id="AK070857">
    <property type="status" value="NOT_ANNOTATED_CDS"/>
    <property type="molecule type" value="mRNA"/>
</dbReference>
<dbReference type="RefSeq" id="XP_015636581.1">
    <property type="nucleotide sequence ID" value="XM_015781095.1"/>
</dbReference>
<dbReference type="FunCoup" id="Q0J952">
    <property type="interactions" value="1958"/>
</dbReference>
<dbReference type="STRING" id="39947.Q0J952"/>
<dbReference type="iPTMnet" id="Q0J952"/>
<dbReference type="PaxDb" id="39947-Q0J952"/>
<dbReference type="EnsemblPlants" id="Os04t0671800-01">
    <property type="protein sequence ID" value="Os04t0671800-01"/>
    <property type="gene ID" value="Os04g0671800"/>
</dbReference>
<dbReference type="Gramene" id="Os04t0671800-01">
    <property type="protein sequence ID" value="Os04t0671800-01"/>
    <property type="gene ID" value="Os04g0671800"/>
</dbReference>
<dbReference type="KEGG" id="dosa:Os04g0671800"/>
<dbReference type="eggNOG" id="KOG4791">
    <property type="taxonomic scope" value="Eukaryota"/>
</dbReference>
<dbReference type="HOGENOM" id="CLU_025172_0_0_1"/>
<dbReference type="InParanoid" id="Q0J952"/>
<dbReference type="OMA" id="GGDHPEC"/>
<dbReference type="OrthoDB" id="5395350at2759"/>
<dbReference type="Proteomes" id="UP000000763">
    <property type="component" value="Chromosome 4"/>
</dbReference>
<dbReference type="Proteomes" id="UP000007752">
    <property type="component" value="Chromosome 4"/>
</dbReference>
<dbReference type="Proteomes" id="UP000059680">
    <property type="component" value="Chromosome 4"/>
</dbReference>
<dbReference type="ExpressionAtlas" id="Q0J952">
    <property type="expression patterns" value="baseline and differential"/>
</dbReference>
<dbReference type="GO" id="GO:0003677">
    <property type="term" value="F:DNA binding"/>
    <property type="evidence" value="ECO:0007669"/>
    <property type="project" value="UniProtKB-KW"/>
</dbReference>
<dbReference type="GO" id="GO:0003729">
    <property type="term" value="F:mRNA binding"/>
    <property type="evidence" value="ECO:0000318"/>
    <property type="project" value="GO_Central"/>
</dbReference>
<dbReference type="GO" id="GO:0008270">
    <property type="term" value="F:zinc ion binding"/>
    <property type="evidence" value="ECO:0007669"/>
    <property type="project" value="UniProtKB-KW"/>
</dbReference>
<dbReference type="FunFam" id="4.10.1000.10:FF:000021">
    <property type="entry name" value="Zinc finger CCCH domain-containing protein 17"/>
    <property type="match status" value="1"/>
</dbReference>
<dbReference type="Gene3D" id="4.10.1000.10">
    <property type="entry name" value="Zinc finger, CCCH-type"/>
    <property type="match status" value="2"/>
</dbReference>
<dbReference type="InterPro" id="IPR041686">
    <property type="entry name" value="Znf-CCCH_3"/>
</dbReference>
<dbReference type="InterPro" id="IPR000571">
    <property type="entry name" value="Znf_CCCH"/>
</dbReference>
<dbReference type="InterPro" id="IPR036855">
    <property type="entry name" value="Znf_CCCH_sf"/>
</dbReference>
<dbReference type="PANTHER" id="PTHR15725:SF14">
    <property type="entry name" value="ZINC FINGER CCCH DOMAIN-CONTAINING PROTEIN 11A"/>
    <property type="match status" value="1"/>
</dbReference>
<dbReference type="PANTHER" id="PTHR15725">
    <property type="entry name" value="ZN-FINGER, C-X8-C-X5-C-X3-H TYPE-CONTAINING"/>
    <property type="match status" value="1"/>
</dbReference>
<dbReference type="Pfam" id="PF14608">
    <property type="entry name" value="zf-CCCH_2"/>
    <property type="match status" value="1"/>
</dbReference>
<dbReference type="Pfam" id="PF15663">
    <property type="entry name" value="zf-CCCH_3"/>
    <property type="match status" value="1"/>
</dbReference>
<dbReference type="SMART" id="SM00356">
    <property type="entry name" value="ZnF_C3H1"/>
    <property type="match status" value="3"/>
</dbReference>
<dbReference type="SUPFAM" id="SSF90229">
    <property type="entry name" value="CCCH zinc finger"/>
    <property type="match status" value="1"/>
</dbReference>
<dbReference type="PROSITE" id="PS50103">
    <property type="entry name" value="ZF_C3H1"/>
    <property type="match status" value="3"/>
</dbReference>